<sequence length="18" mass="2217">RGWGSDEKKDREEEXEQQ</sequence>
<accession>P84712</accession>
<comment type="function">
    <text evidence="1">Inhibitor of serine proteases. Can inhibit trypsin but is ineffective against chymotrypsin, papain and elastase. Strongly inhibits the trypsin-like protease activity isolated from the third instar larva of P.truncatus, and also inhibits more weakly the trypsin-like protease activity isolated from the third instar larva of M.sexta. Protects the plant by inhibiting proteases of invading organisms.</text>
</comment>
<comment type="tissue specificity">
    <text evidence="1">Detected in seeds (at protein level).</text>
</comment>
<protein>
    <recommendedName>
        <fullName>Trypsin inhibitor HSTI</fullName>
    </recommendedName>
</protein>
<organism>
    <name type="scientific">Mesosphaerum suaveolens</name>
    <name type="common">Pignut</name>
    <name type="synonym">Hyptis suaveolens</name>
    <dbReference type="NCBI Taxonomy" id="204129"/>
    <lineage>
        <taxon>Eukaryota</taxon>
        <taxon>Viridiplantae</taxon>
        <taxon>Streptophyta</taxon>
        <taxon>Embryophyta</taxon>
        <taxon>Tracheophyta</taxon>
        <taxon>Spermatophyta</taxon>
        <taxon>Magnoliopsida</taxon>
        <taxon>eudicotyledons</taxon>
        <taxon>Gunneridae</taxon>
        <taxon>Pentapetalae</taxon>
        <taxon>asterids</taxon>
        <taxon>lamiids</taxon>
        <taxon>Lamiales</taxon>
        <taxon>Lamiaceae</taxon>
        <taxon>Nepetoideae</taxon>
        <taxon>Ocimeae</taxon>
        <taxon>Hyptidinae</taxon>
        <taxon>Mesosphaerum</taxon>
    </lineage>
</organism>
<reference evidence="3" key="1">
    <citation type="journal article" date="2004" name="Comp. Biochem. Physiol.">
        <title>A novel 8.7 kDa protease inhibitor from chan seeds (Hyptis suaveolens L.) inhibits proteases from the larger grain borer Prostephanus truncatus (Coleoptera: Bostrichidae).</title>
        <authorList>
            <person name="Aguirre C."/>
            <person name="Valdes-Rodriguez S."/>
            <person name="Mendoza-Hernandez G."/>
            <person name="Rojo-Dominguez A."/>
            <person name="Blanco-Labra A."/>
        </authorList>
    </citation>
    <scope>PROTEIN SEQUENCE</scope>
    <scope>FUNCTION</scope>
    <scope>TISSUE SPECIFICITY</scope>
    <source>
        <tissue evidence="1">Seed</tissue>
    </source>
</reference>
<proteinExistence type="evidence at protein level"/>
<keyword id="KW-0903">Direct protein sequencing</keyword>
<keyword id="KW-0646">Protease inhibitor</keyword>
<keyword id="KW-0722">Serine protease inhibitor</keyword>
<name>TRIN1_MESSA</name>
<evidence type="ECO:0000269" key="1">
    <source>
    </source>
</evidence>
<evidence type="ECO:0000303" key="2">
    <source>
    </source>
</evidence>
<evidence type="ECO:0000305" key="3"/>
<dbReference type="GO" id="GO:0005615">
    <property type="term" value="C:extracellular space"/>
    <property type="evidence" value="ECO:0000314"/>
    <property type="project" value="UniProtKB"/>
</dbReference>
<dbReference type="GO" id="GO:0030414">
    <property type="term" value="F:peptidase inhibitor activity"/>
    <property type="evidence" value="ECO:0000314"/>
    <property type="project" value="UniProtKB"/>
</dbReference>
<dbReference type="GO" id="GO:0004867">
    <property type="term" value="F:serine-type endopeptidase inhibitor activity"/>
    <property type="evidence" value="ECO:0007669"/>
    <property type="project" value="UniProtKB-KW"/>
</dbReference>
<dbReference type="GO" id="GO:0090729">
    <property type="term" value="F:toxin activity"/>
    <property type="evidence" value="ECO:0000314"/>
    <property type="project" value="UniProtKB"/>
</dbReference>
<feature type="chain" id="PRO_0000065630" description="Trypsin inhibitor HSTI">
    <location>
        <begin position="1"/>
        <end position="18" status="greater than"/>
    </location>
</feature>
<feature type="non-terminal residue" evidence="2">
    <location>
        <position position="18"/>
    </location>
</feature>